<gene>
    <name type="primary">DREB1C</name>
    <name type="synonym">CBF1</name>
    <name type="synonym">ERF26</name>
    <name type="ORF">OsI_020719</name>
</gene>
<organism>
    <name type="scientific">Oryza sativa subsp. indica</name>
    <name type="common">Rice</name>
    <dbReference type="NCBI Taxonomy" id="39946"/>
    <lineage>
        <taxon>Eukaryota</taxon>
        <taxon>Viridiplantae</taxon>
        <taxon>Streptophyta</taxon>
        <taxon>Embryophyta</taxon>
        <taxon>Tracheophyta</taxon>
        <taxon>Spermatophyta</taxon>
        <taxon>Magnoliopsida</taxon>
        <taxon>Liliopsida</taxon>
        <taxon>Poales</taxon>
        <taxon>Poaceae</taxon>
        <taxon>BOP clade</taxon>
        <taxon>Oryzoideae</taxon>
        <taxon>Oryzeae</taxon>
        <taxon>Oryzinae</taxon>
        <taxon>Oryza</taxon>
        <taxon>Oryza sativa</taxon>
    </lineage>
</organism>
<dbReference type="EMBL" id="CM000131">
    <property type="protein sequence ID" value="EAY99486.1"/>
    <property type="molecule type" value="Genomic_DNA"/>
</dbReference>
<dbReference type="SMR" id="A2Y8S6"/>
<dbReference type="STRING" id="39946.A2Y8S6"/>
<dbReference type="EnsemblPlants" id="BGIOSGA022219-TA">
    <property type="protein sequence ID" value="BGIOSGA022219-PA"/>
    <property type="gene ID" value="BGIOSGA022219"/>
</dbReference>
<dbReference type="EnsemblPlants" id="OsMH63_06G001740_01">
    <property type="protein sequence ID" value="OsMH63_06G001740_01"/>
    <property type="gene ID" value="OsMH63_06G001740"/>
</dbReference>
<dbReference type="EnsemblPlants" id="OsPr106_06g0001780.01">
    <property type="protein sequence ID" value="OsPr106_06g0001780.01"/>
    <property type="gene ID" value="OsPr106_06g0001780"/>
</dbReference>
<dbReference type="Gramene" id="BGIOSGA022219-TA">
    <property type="protein sequence ID" value="BGIOSGA022219-PA"/>
    <property type="gene ID" value="BGIOSGA022219"/>
</dbReference>
<dbReference type="Gramene" id="OsMH63_06G001740_01">
    <property type="protein sequence ID" value="OsMH63_06G001740_01"/>
    <property type="gene ID" value="OsMH63_06G001740"/>
</dbReference>
<dbReference type="Gramene" id="OsPr106_06g0001780.01">
    <property type="protein sequence ID" value="OsPr106_06g0001780.01"/>
    <property type="gene ID" value="OsPr106_06g0001780"/>
</dbReference>
<dbReference type="HOGENOM" id="CLU_063331_1_0_1"/>
<dbReference type="OMA" id="AMYGNMD"/>
<dbReference type="Proteomes" id="UP000007015">
    <property type="component" value="Chromosome 6"/>
</dbReference>
<dbReference type="GO" id="GO:0005634">
    <property type="term" value="C:nucleus"/>
    <property type="evidence" value="ECO:0007669"/>
    <property type="project" value="UniProtKB-SubCell"/>
</dbReference>
<dbReference type="GO" id="GO:0003677">
    <property type="term" value="F:DNA binding"/>
    <property type="evidence" value="ECO:0007669"/>
    <property type="project" value="UniProtKB-KW"/>
</dbReference>
<dbReference type="GO" id="GO:0003700">
    <property type="term" value="F:DNA-binding transcription factor activity"/>
    <property type="evidence" value="ECO:0007669"/>
    <property type="project" value="InterPro"/>
</dbReference>
<dbReference type="CDD" id="cd00018">
    <property type="entry name" value="AP2"/>
    <property type="match status" value="1"/>
</dbReference>
<dbReference type="FunFam" id="3.30.730.10:FF:000001">
    <property type="entry name" value="Ethylene-responsive transcription factor 2"/>
    <property type="match status" value="1"/>
</dbReference>
<dbReference type="Gene3D" id="3.30.730.10">
    <property type="entry name" value="AP2/ERF domain"/>
    <property type="match status" value="1"/>
</dbReference>
<dbReference type="InterPro" id="IPR001471">
    <property type="entry name" value="AP2/ERF_dom"/>
</dbReference>
<dbReference type="InterPro" id="IPR036955">
    <property type="entry name" value="AP2/ERF_dom_sf"/>
</dbReference>
<dbReference type="InterPro" id="IPR016177">
    <property type="entry name" value="DNA-bd_dom_sf"/>
</dbReference>
<dbReference type="InterPro" id="IPR045277">
    <property type="entry name" value="DRE1A-I"/>
</dbReference>
<dbReference type="PANTHER" id="PTHR31839:SF58">
    <property type="entry name" value="DEHYDRATION-RESPONSIVE ELEMENT-BINDING PROTEIN 1C"/>
    <property type="match status" value="1"/>
</dbReference>
<dbReference type="PANTHER" id="PTHR31839">
    <property type="entry name" value="DEHYDRATION-RESPONSIVE ELEMENT-BINDING PROTEIN 1D"/>
    <property type="match status" value="1"/>
</dbReference>
<dbReference type="Pfam" id="PF00847">
    <property type="entry name" value="AP2"/>
    <property type="match status" value="1"/>
</dbReference>
<dbReference type="PRINTS" id="PR00367">
    <property type="entry name" value="ETHRSPELEMNT"/>
</dbReference>
<dbReference type="SMART" id="SM00380">
    <property type="entry name" value="AP2"/>
    <property type="match status" value="1"/>
</dbReference>
<dbReference type="SUPFAM" id="SSF54171">
    <property type="entry name" value="DNA-binding domain"/>
    <property type="match status" value="1"/>
</dbReference>
<dbReference type="PROSITE" id="PS51032">
    <property type="entry name" value="AP2_ERF"/>
    <property type="match status" value="1"/>
</dbReference>
<evidence type="ECO:0000250" key="1"/>
<evidence type="ECO:0000255" key="2">
    <source>
        <dbReference type="PROSITE-ProRule" id="PRU00366"/>
    </source>
</evidence>
<evidence type="ECO:0000256" key="3">
    <source>
        <dbReference type="SAM" id="MobiDB-lite"/>
    </source>
</evidence>
<evidence type="ECO:0000305" key="4"/>
<sequence>MEYYEQEEYATVTSAPPKRPAGRTKFRETRHPVYRGVRRRGPAGRWVCEVREPNKKSRIWLGTFATAEAAARAHDVAALALRGRGACLNFADSARLLRVDPATLATPDDIRRAAIELAESCPHDAAAAAASSSAAAVEASAAAAPAMMMQYQDDMAATPSSYDYAYYGNMDFDQPSYYYDGMGGGGEYQSWQMDGDDDGGAGGYGGGDVTLWSY</sequence>
<feature type="chain" id="PRO_0000323032" description="Dehydration-responsive element-binding protein 1C">
    <location>
        <begin position="1"/>
        <end position="214"/>
    </location>
</feature>
<feature type="DNA-binding region" description="AP2/ERF" evidence="2">
    <location>
        <begin position="33"/>
        <end position="91"/>
    </location>
</feature>
<feature type="region of interest" description="Disordered" evidence="3">
    <location>
        <begin position="1"/>
        <end position="24"/>
    </location>
</feature>
<name>DRE1C_ORYSI</name>
<reference key="1">
    <citation type="journal article" date="2005" name="PLoS Biol.">
        <title>The genomes of Oryza sativa: a history of duplications.</title>
        <authorList>
            <person name="Yu J."/>
            <person name="Wang J."/>
            <person name="Lin W."/>
            <person name="Li S."/>
            <person name="Li H."/>
            <person name="Zhou J."/>
            <person name="Ni P."/>
            <person name="Dong W."/>
            <person name="Hu S."/>
            <person name="Zeng C."/>
            <person name="Zhang J."/>
            <person name="Zhang Y."/>
            <person name="Li R."/>
            <person name="Xu Z."/>
            <person name="Li S."/>
            <person name="Li X."/>
            <person name="Zheng H."/>
            <person name="Cong L."/>
            <person name="Lin L."/>
            <person name="Yin J."/>
            <person name="Geng J."/>
            <person name="Li G."/>
            <person name="Shi J."/>
            <person name="Liu J."/>
            <person name="Lv H."/>
            <person name="Li J."/>
            <person name="Wang J."/>
            <person name="Deng Y."/>
            <person name="Ran L."/>
            <person name="Shi X."/>
            <person name="Wang X."/>
            <person name="Wu Q."/>
            <person name="Li C."/>
            <person name="Ren X."/>
            <person name="Wang J."/>
            <person name="Wang X."/>
            <person name="Li D."/>
            <person name="Liu D."/>
            <person name="Zhang X."/>
            <person name="Ji Z."/>
            <person name="Zhao W."/>
            <person name="Sun Y."/>
            <person name="Zhang Z."/>
            <person name="Bao J."/>
            <person name="Han Y."/>
            <person name="Dong L."/>
            <person name="Ji J."/>
            <person name="Chen P."/>
            <person name="Wu S."/>
            <person name="Liu J."/>
            <person name="Xiao Y."/>
            <person name="Bu D."/>
            <person name="Tan J."/>
            <person name="Yang L."/>
            <person name="Ye C."/>
            <person name="Zhang J."/>
            <person name="Xu J."/>
            <person name="Zhou Y."/>
            <person name="Yu Y."/>
            <person name="Zhang B."/>
            <person name="Zhuang S."/>
            <person name="Wei H."/>
            <person name="Liu B."/>
            <person name="Lei M."/>
            <person name="Yu H."/>
            <person name="Li Y."/>
            <person name="Xu H."/>
            <person name="Wei S."/>
            <person name="He X."/>
            <person name="Fang L."/>
            <person name="Zhang Z."/>
            <person name="Zhang Y."/>
            <person name="Huang X."/>
            <person name="Su Z."/>
            <person name="Tong W."/>
            <person name="Li J."/>
            <person name="Tong Z."/>
            <person name="Li S."/>
            <person name="Ye J."/>
            <person name="Wang L."/>
            <person name="Fang L."/>
            <person name="Lei T."/>
            <person name="Chen C.-S."/>
            <person name="Chen H.-C."/>
            <person name="Xu Z."/>
            <person name="Li H."/>
            <person name="Huang H."/>
            <person name="Zhang F."/>
            <person name="Xu H."/>
            <person name="Li N."/>
            <person name="Zhao C."/>
            <person name="Li S."/>
            <person name="Dong L."/>
            <person name="Huang Y."/>
            <person name="Li L."/>
            <person name="Xi Y."/>
            <person name="Qi Q."/>
            <person name="Li W."/>
            <person name="Zhang B."/>
            <person name="Hu W."/>
            <person name="Zhang Y."/>
            <person name="Tian X."/>
            <person name="Jiao Y."/>
            <person name="Liang X."/>
            <person name="Jin J."/>
            <person name="Gao L."/>
            <person name="Zheng W."/>
            <person name="Hao B."/>
            <person name="Liu S.-M."/>
            <person name="Wang W."/>
            <person name="Yuan L."/>
            <person name="Cao M."/>
            <person name="McDermott J."/>
            <person name="Samudrala R."/>
            <person name="Wang J."/>
            <person name="Wong G.K.-S."/>
            <person name="Yang H."/>
        </authorList>
    </citation>
    <scope>NUCLEOTIDE SEQUENCE [LARGE SCALE GENOMIC DNA]</scope>
    <source>
        <strain>cv. 93-11</strain>
    </source>
</reference>
<accession>A2Y8S6</accession>
<comment type="function">
    <text evidence="1">Transcriptional activator that binds specifically to the DNA sequence 5'-[AG]CCGAC-3'. Binding to the C-repeat/DRE element mediates high salinity- and dehydration-inducible transcription (By similarity).</text>
</comment>
<comment type="subcellular location">
    <subcellularLocation>
        <location evidence="4">Nucleus</location>
    </subcellularLocation>
</comment>
<comment type="similarity">
    <text evidence="4">Belongs to the AP2/ERF transcription factor family. ERF subfamily.</text>
</comment>
<protein>
    <recommendedName>
        <fullName>Dehydration-responsive element-binding protein 1C</fullName>
        <shortName>Protein DREB1C</shortName>
    </recommendedName>
    <alternativeName>
        <fullName>Protein C-repeat-binding factor 1</fullName>
    </alternativeName>
</protein>
<keyword id="KW-0010">Activator</keyword>
<keyword id="KW-0238">DNA-binding</keyword>
<keyword id="KW-0539">Nucleus</keyword>
<keyword id="KW-1185">Reference proteome</keyword>
<keyword id="KW-0346">Stress response</keyword>
<keyword id="KW-0804">Transcription</keyword>
<keyword id="KW-0805">Transcription regulation</keyword>
<proteinExistence type="inferred from homology"/>